<name>DXR_SOLUE</name>
<gene>
    <name evidence="1" type="primary">dxr</name>
    <name type="ordered locus">Acid_7136</name>
</gene>
<reference key="1">
    <citation type="journal article" date="2009" name="Appl. Environ. Microbiol.">
        <title>Three genomes from the phylum Acidobacteria provide insight into the lifestyles of these microorganisms in soils.</title>
        <authorList>
            <person name="Ward N.L."/>
            <person name="Challacombe J.F."/>
            <person name="Janssen P.H."/>
            <person name="Henrissat B."/>
            <person name="Coutinho P.M."/>
            <person name="Wu M."/>
            <person name="Xie G."/>
            <person name="Haft D.H."/>
            <person name="Sait M."/>
            <person name="Badger J."/>
            <person name="Barabote R.D."/>
            <person name="Bradley B."/>
            <person name="Brettin T.S."/>
            <person name="Brinkac L.M."/>
            <person name="Bruce D."/>
            <person name="Creasy T."/>
            <person name="Daugherty S.C."/>
            <person name="Davidsen T.M."/>
            <person name="DeBoy R.T."/>
            <person name="Detter J.C."/>
            <person name="Dodson R.J."/>
            <person name="Durkin A.S."/>
            <person name="Ganapathy A."/>
            <person name="Gwinn-Giglio M."/>
            <person name="Han C.S."/>
            <person name="Khouri H."/>
            <person name="Kiss H."/>
            <person name="Kothari S.P."/>
            <person name="Madupu R."/>
            <person name="Nelson K.E."/>
            <person name="Nelson W.C."/>
            <person name="Paulsen I."/>
            <person name="Penn K."/>
            <person name="Ren Q."/>
            <person name="Rosovitz M.J."/>
            <person name="Selengut J.D."/>
            <person name="Shrivastava S."/>
            <person name="Sullivan S.A."/>
            <person name="Tapia R."/>
            <person name="Thompson L.S."/>
            <person name="Watkins K.L."/>
            <person name="Yang Q."/>
            <person name="Yu C."/>
            <person name="Zafar N."/>
            <person name="Zhou L."/>
            <person name="Kuske C.R."/>
        </authorList>
    </citation>
    <scope>NUCLEOTIDE SEQUENCE [LARGE SCALE GENOMIC DNA]</scope>
    <source>
        <strain>Ellin6076</strain>
    </source>
</reference>
<evidence type="ECO:0000255" key="1">
    <source>
        <dbReference type="HAMAP-Rule" id="MF_00183"/>
    </source>
</evidence>
<accession>Q01QM3</accession>
<protein>
    <recommendedName>
        <fullName evidence="1">1-deoxy-D-xylulose 5-phosphate reductoisomerase</fullName>
        <shortName evidence="1">DXP reductoisomerase</shortName>
        <ecNumber evidence="1">1.1.1.267</ecNumber>
    </recommendedName>
    <alternativeName>
        <fullName evidence="1">1-deoxyxylulose-5-phosphate reductoisomerase</fullName>
    </alternativeName>
    <alternativeName>
        <fullName evidence="1">2-C-methyl-D-erythritol 4-phosphate synthase</fullName>
    </alternativeName>
</protein>
<keyword id="KW-0414">Isoprene biosynthesis</keyword>
<keyword id="KW-0464">Manganese</keyword>
<keyword id="KW-0479">Metal-binding</keyword>
<keyword id="KW-0521">NADP</keyword>
<keyword id="KW-0560">Oxidoreductase</keyword>
<sequence>MKTIAVLGSTGSIGTNTLDVVRRNRHLYEVYSLVAGQNIELLTGQILEFRPKLAVVASAAVLDLLTASLQAAGLPKSEWPDLLSGDAARVAAVRAPEVDTVISAIVGVAGLEATYEAVCLGKRVGLANKEVLVSGGSLVMEAVRKFGAELLPVDSEHNGAHQCLRAGNRAQVSRLILTASGGPFRNTPVSELPFVTPGQALNHPTWKMGNRITIDCATLMNKGFEVIEACWLFDFAPRDVGVVIHPQSTVHAMIEYSDGSVLAQISATDMRMPIQYALTYPDRADAPVPKIDWAEARKWEFLPPDLEKFPLLKLAYQCQESGGSATCILNAADEIAVEAFLQGRIGFLSIHEIVQETLSRMPSRTPASVGDILEIDRESRTLARELANCRAAGTVTA</sequence>
<organism>
    <name type="scientific">Solibacter usitatus (strain Ellin6076)</name>
    <dbReference type="NCBI Taxonomy" id="234267"/>
    <lineage>
        <taxon>Bacteria</taxon>
        <taxon>Pseudomonadati</taxon>
        <taxon>Acidobacteriota</taxon>
        <taxon>Terriglobia</taxon>
        <taxon>Bryobacterales</taxon>
        <taxon>Solibacteraceae</taxon>
        <taxon>Candidatus Solibacter</taxon>
    </lineage>
</organism>
<proteinExistence type="inferred from homology"/>
<dbReference type="EC" id="1.1.1.267" evidence="1"/>
<dbReference type="EMBL" id="CP000473">
    <property type="protein sequence ID" value="ABJ88047.1"/>
    <property type="molecule type" value="Genomic_DNA"/>
</dbReference>
<dbReference type="SMR" id="Q01QM3"/>
<dbReference type="FunCoup" id="Q01QM3">
    <property type="interactions" value="381"/>
</dbReference>
<dbReference type="STRING" id="234267.Acid_7136"/>
<dbReference type="KEGG" id="sus:Acid_7136"/>
<dbReference type="eggNOG" id="COG0743">
    <property type="taxonomic scope" value="Bacteria"/>
</dbReference>
<dbReference type="HOGENOM" id="CLU_035714_4_0_0"/>
<dbReference type="InParanoid" id="Q01QM3"/>
<dbReference type="OrthoDB" id="9806546at2"/>
<dbReference type="UniPathway" id="UPA00056">
    <property type="reaction ID" value="UER00092"/>
</dbReference>
<dbReference type="GO" id="GO:0030604">
    <property type="term" value="F:1-deoxy-D-xylulose-5-phosphate reductoisomerase activity"/>
    <property type="evidence" value="ECO:0007669"/>
    <property type="project" value="UniProtKB-UniRule"/>
</dbReference>
<dbReference type="GO" id="GO:0030145">
    <property type="term" value="F:manganese ion binding"/>
    <property type="evidence" value="ECO:0007669"/>
    <property type="project" value="TreeGrafter"/>
</dbReference>
<dbReference type="GO" id="GO:0070402">
    <property type="term" value="F:NADPH binding"/>
    <property type="evidence" value="ECO:0007669"/>
    <property type="project" value="InterPro"/>
</dbReference>
<dbReference type="GO" id="GO:0051484">
    <property type="term" value="P:isopentenyl diphosphate biosynthetic process, methylerythritol 4-phosphate pathway involved in terpenoid biosynthetic process"/>
    <property type="evidence" value="ECO:0007669"/>
    <property type="project" value="TreeGrafter"/>
</dbReference>
<dbReference type="FunFam" id="3.40.50.720:FF:000045">
    <property type="entry name" value="1-deoxy-D-xylulose 5-phosphate reductoisomerase"/>
    <property type="match status" value="1"/>
</dbReference>
<dbReference type="Gene3D" id="1.10.1740.10">
    <property type="match status" value="1"/>
</dbReference>
<dbReference type="Gene3D" id="3.40.50.720">
    <property type="entry name" value="NAD(P)-binding Rossmann-like Domain"/>
    <property type="match status" value="1"/>
</dbReference>
<dbReference type="HAMAP" id="MF_00183">
    <property type="entry name" value="DXP_reductoisom"/>
    <property type="match status" value="1"/>
</dbReference>
<dbReference type="InterPro" id="IPR003821">
    <property type="entry name" value="DXP_reductoisomerase"/>
</dbReference>
<dbReference type="InterPro" id="IPR013644">
    <property type="entry name" value="DXP_reductoisomerase_C"/>
</dbReference>
<dbReference type="InterPro" id="IPR013512">
    <property type="entry name" value="DXP_reductoisomerase_N"/>
</dbReference>
<dbReference type="InterPro" id="IPR026877">
    <property type="entry name" value="DXPR_C"/>
</dbReference>
<dbReference type="InterPro" id="IPR036169">
    <property type="entry name" value="DXPR_C_sf"/>
</dbReference>
<dbReference type="InterPro" id="IPR036291">
    <property type="entry name" value="NAD(P)-bd_dom_sf"/>
</dbReference>
<dbReference type="NCBIfam" id="TIGR00243">
    <property type="entry name" value="Dxr"/>
    <property type="match status" value="1"/>
</dbReference>
<dbReference type="PANTHER" id="PTHR30525">
    <property type="entry name" value="1-DEOXY-D-XYLULOSE 5-PHOSPHATE REDUCTOISOMERASE"/>
    <property type="match status" value="1"/>
</dbReference>
<dbReference type="PANTHER" id="PTHR30525:SF0">
    <property type="entry name" value="1-DEOXY-D-XYLULOSE 5-PHOSPHATE REDUCTOISOMERASE, CHLOROPLASTIC"/>
    <property type="match status" value="1"/>
</dbReference>
<dbReference type="Pfam" id="PF08436">
    <property type="entry name" value="DXP_redisom_C"/>
    <property type="match status" value="1"/>
</dbReference>
<dbReference type="Pfam" id="PF02670">
    <property type="entry name" value="DXP_reductoisom"/>
    <property type="match status" value="1"/>
</dbReference>
<dbReference type="Pfam" id="PF13288">
    <property type="entry name" value="DXPR_C"/>
    <property type="match status" value="1"/>
</dbReference>
<dbReference type="PIRSF" id="PIRSF006205">
    <property type="entry name" value="Dxp_reductismrs"/>
    <property type="match status" value="1"/>
</dbReference>
<dbReference type="SUPFAM" id="SSF69055">
    <property type="entry name" value="1-deoxy-D-xylulose-5-phosphate reductoisomerase, C-terminal domain"/>
    <property type="match status" value="1"/>
</dbReference>
<dbReference type="SUPFAM" id="SSF55347">
    <property type="entry name" value="Glyceraldehyde-3-phosphate dehydrogenase-like, C-terminal domain"/>
    <property type="match status" value="1"/>
</dbReference>
<dbReference type="SUPFAM" id="SSF51735">
    <property type="entry name" value="NAD(P)-binding Rossmann-fold domains"/>
    <property type="match status" value="1"/>
</dbReference>
<comment type="function">
    <text evidence="1">Catalyzes the NADPH-dependent rearrangement and reduction of 1-deoxy-D-xylulose-5-phosphate (DXP) to 2-C-methyl-D-erythritol 4-phosphate (MEP).</text>
</comment>
<comment type="catalytic activity">
    <reaction evidence="1">
        <text>2-C-methyl-D-erythritol 4-phosphate + NADP(+) = 1-deoxy-D-xylulose 5-phosphate + NADPH + H(+)</text>
        <dbReference type="Rhea" id="RHEA:13717"/>
        <dbReference type="ChEBI" id="CHEBI:15378"/>
        <dbReference type="ChEBI" id="CHEBI:57783"/>
        <dbReference type="ChEBI" id="CHEBI:57792"/>
        <dbReference type="ChEBI" id="CHEBI:58262"/>
        <dbReference type="ChEBI" id="CHEBI:58349"/>
        <dbReference type="EC" id="1.1.1.267"/>
    </reaction>
    <physiologicalReaction direction="right-to-left" evidence="1">
        <dbReference type="Rhea" id="RHEA:13719"/>
    </physiologicalReaction>
</comment>
<comment type="cofactor">
    <cofactor evidence="1">
        <name>Mg(2+)</name>
        <dbReference type="ChEBI" id="CHEBI:18420"/>
    </cofactor>
    <cofactor evidence="1">
        <name>Mn(2+)</name>
        <dbReference type="ChEBI" id="CHEBI:29035"/>
    </cofactor>
</comment>
<comment type="pathway">
    <text evidence="1">Isoprenoid biosynthesis; isopentenyl diphosphate biosynthesis via DXP pathway; isopentenyl diphosphate from 1-deoxy-D-xylulose 5-phosphate: step 1/6.</text>
</comment>
<comment type="similarity">
    <text evidence="1">Belongs to the DXR family.</text>
</comment>
<feature type="chain" id="PRO_1000020316" description="1-deoxy-D-xylulose 5-phosphate reductoisomerase">
    <location>
        <begin position="1"/>
        <end position="397"/>
    </location>
</feature>
<feature type="binding site" evidence="1">
    <location>
        <position position="10"/>
    </location>
    <ligand>
        <name>NADPH</name>
        <dbReference type="ChEBI" id="CHEBI:57783"/>
    </ligand>
</feature>
<feature type="binding site" evidence="1">
    <location>
        <position position="11"/>
    </location>
    <ligand>
        <name>NADPH</name>
        <dbReference type="ChEBI" id="CHEBI:57783"/>
    </ligand>
</feature>
<feature type="binding site" evidence="1">
    <location>
        <position position="12"/>
    </location>
    <ligand>
        <name>NADPH</name>
        <dbReference type="ChEBI" id="CHEBI:57783"/>
    </ligand>
</feature>
<feature type="binding site" evidence="1">
    <location>
        <position position="13"/>
    </location>
    <ligand>
        <name>NADPH</name>
        <dbReference type="ChEBI" id="CHEBI:57783"/>
    </ligand>
</feature>
<feature type="binding site" evidence="1">
    <location>
        <position position="36"/>
    </location>
    <ligand>
        <name>NADPH</name>
        <dbReference type="ChEBI" id="CHEBI:57783"/>
    </ligand>
</feature>
<feature type="binding site" evidence="1">
    <location>
        <position position="38"/>
    </location>
    <ligand>
        <name>NADPH</name>
        <dbReference type="ChEBI" id="CHEBI:57783"/>
    </ligand>
</feature>
<feature type="binding site" evidence="1">
    <location>
        <position position="128"/>
    </location>
    <ligand>
        <name>NADPH</name>
        <dbReference type="ChEBI" id="CHEBI:57783"/>
    </ligand>
</feature>
<feature type="binding site" evidence="1">
    <location>
        <position position="129"/>
    </location>
    <ligand>
        <name>1-deoxy-D-xylulose 5-phosphate</name>
        <dbReference type="ChEBI" id="CHEBI:57792"/>
    </ligand>
</feature>
<feature type="binding site" evidence="1">
    <location>
        <position position="130"/>
    </location>
    <ligand>
        <name>NADPH</name>
        <dbReference type="ChEBI" id="CHEBI:57783"/>
    </ligand>
</feature>
<feature type="binding site" evidence="1">
    <location>
        <position position="154"/>
    </location>
    <ligand>
        <name>Mn(2+)</name>
        <dbReference type="ChEBI" id="CHEBI:29035"/>
    </ligand>
</feature>
<feature type="binding site" evidence="1">
    <location>
        <position position="155"/>
    </location>
    <ligand>
        <name>1-deoxy-D-xylulose 5-phosphate</name>
        <dbReference type="ChEBI" id="CHEBI:57792"/>
    </ligand>
</feature>
<feature type="binding site" evidence="1">
    <location>
        <position position="156"/>
    </location>
    <ligand>
        <name>1-deoxy-D-xylulose 5-phosphate</name>
        <dbReference type="ChEBI" id="CHEBI:57792"/>
    </ligand>
</feature>
<feature type="binding site" evidence="1">
    <location>
        <position position="156"/>
    </location>
    <ligand>
        <name>Mn(2+)</name>
        <dbReference type="ChEBI" id="CHEBI:29035"/>
    </ligand>
</feature>
<feature type="binding site" evidence="1">
    <location>
        <position position="180"/>
    </location>
    <ligand>
        <name>1-deoxy-D-xylulose 5-phosphate</name>
        <dbReference type="ChEBI" id="CHEBI:57792"/>
    </ligand>
</feature>
<feature type="binding site" evidence="1">
    <location>
        <position position="203"/>
    </location>
    <ligand>
        <name>1-deoxy-D-xylulose 5-phosphate</name>
        <dbReference type="ChEBI" id="CHEBI:57792"/>
    </ligand>
</feature>
<feature type="binding site" evidence="1">
    <location>
        <position position="209"/>
    </location>
    <ligand>
        <name>NADPH</name>
        <dbReference type="ChEBI" id="CHEBI:57783"/>
    </ligand>
</feature>
<feature type="binding site" evidence="1">
    <location>
        <position position="221"/>
    </location>
    <ligand>
        <name>1-deoxy-D-xylulose 5-phosphate</name>
        <dbReference type="ChEBI" id="CHEBI:57792"/>
    </ligand>
</feature>
<feature type="binding site" evidence="1">
    <location>
        <position position="222"/>
    </location>
    <ligand>
        <name>1-deoxy-D-xylulose 5-phosphate</name>
        <dbReference type="ChEBI" id="CHEBI:57792"/>
    </ligand>
</feature>
<feature type="binding site" evidence="1">
    <location>
        <position position="225"/>
    </location>
    <ligand>
        <name>1-deoxy-D-xylulose 5-phosphate</name>
        <dbReference type="ChEBI" id="CHEBI:57792"/>
    </ligand>
</feature>
<feature type="binding site" evidence="1">
    <location>
        <position position="225"/>
    </location>
    <ligand>
        <name>Mn(2+)</name>
        <dbReference type="ChEBI" id="CHEBI:29035"/>
    </ligand>
</feature>